<accession>Q9JM62</accession>
<accession>Q8K0X2</accession>
<dbReference type="EMBL" id="AY562234">
    <property type="protein sequence ID" value="AAT70679.1"/>
    <property type="molecule type" value="mRNA"/>
</dbReference>
<dbReference type="EMBL" id="AB039933">
    <property type="protein sequence ID" value="BAA94544.1"/>
    <property type="molecule type" value="mRNA"/>
</dbReference>
<dbReference type="EMBL" id="BC029741">
    <property type="protein sequence ID" value="AAH29741.1"/>
    <property type="molecule type" value="mRNA"/>
</dbReference>
<dbReference type="CCDS" id="CCDS35979.1">
    <molecule id="Q9JM62-1"/>
</dbReference>
<dbReference type="CCDS" id="CCDS56735.1">
    <molecule id="Q9JM62-2"/>
</dbReference>
<dbReference type="RefSeq" id="NP_001191860.1">
    <molecule id="Q9JM62-2"/>
    <property type="nucleotide sequence ID" value="NM_001204931.1"/>
</dbReference>
<dbReference type="RefSeq" id="NP_647453.1">
    <molecule id="Q9JM62-1"/>
    <property type="nucleotide sequence ID" value="NM_139292.2"/>
</dbReference>
<dbReference type="BioGRID" id="213988">
    <property type="interactions" value="2"/>
</dbReference>
<dbReference type="FunCoup" id="Q9JM62">
    <property type="interactions" value="388"/>
</dbReference>
<dbReference type="STRING" id="10090.ENSMUSP00000100991"/>
<dbReference type="GlyGen" id="Q9JM62">
    <property type="glycosylation" value="2 sites, 1 O-linked glycan (1 site)"/>
</dbReference>
<dbReference type="iPTMnet" id="Q9JM62"/>
<dbReference type="PhosphoSitePlus" id="Q9JM62"/>
<dbReference type="SwissPalm" id="Q9JM62"/>
<dbReference type="jPOST" id="Q9JM62"/>
<dbReference type="PaxDb" id="10090-ENSMUSP00000100991"/>
<dbReference type="PeptideAtlas" id="Q9JM62"/>
<dbReference type="ProteomicsDB" id="255175">
    <molecule id="Q9JM62-1"/>
</dbReference>
<dbReference type="ProteomicsDB" id="255176">
    <molecule id="Q9JM62-2"/>
</dbReference>
<dbReference type="Pumba" id="Q9JM62"/>
<dbReference type="DNASU" id="70335"/>
<dbReference type="Ensembl" id="ENSMUST00000105354.8">
    <molecule id="Q9JM62-1"/>
    <property type="protein sequence ID" value="ENSMUSP00000100991.2"/>
    <property type="gene ID" value="ENSMUSG00000035504.17"/>
</dbReference>
<dbReference type="Ensembl" id="ENSMUST00000105355.8">
    <molecule id="Q9JM62-2"/>
    <property type="protein sequence ID" value="ENSMUSP00000100992.2"/>
    <property type="gene ID" value="ENSMUSG00000035504.17"/>
</dbReference>
<dbReference type="Ensembl" id="ENSMUST00000186864.7">
    <molecule id="Q9JM62-1"/>
    <property type="protein sequence ID" value="ENSMUSP00000140840.2"/>
    <property type="gene ID" value="ENSMUSG00000035504.17"/>
</dbReference>
<dbReference type="GeneID" id="70335"/>
<dbReference type="KEGG" id="mmu:70335"/>
<dbReference type="UCSC" id="uc007gct.2">
    <molecule id="Q9JM62-1"/>
    <property type="organism name" value="mouse"/>
</dbReference>
<dbReference type="UCSC" id="uc007gcu.2">
    <molecule id="Q9JM62-2"/>
    <property type="organism name" value="mouse"/>
</dbReference>
<dbReference type="AGR" id="MGI:1917585"/>
<dbReference type="CTD" id="92840"/>
<dbReference type="MGI" id="MGI:1917585">
    <property type="gene designation" value="Reep6"/>
</dbReference>
<dbReference type="VEuPathDB" id="HostDB:ENSMUSG00000035504"/>
<dbReference type="eggNOG" id="KOG1725">
    <property type="taxonomic scope" value="Eukaryota"/>
</dbReference>
<dbReference type="GeneTree" id="ENSGT00470000042565"/>
<dbReference type="InParanoid" id="Q9JM62"/>
<dbReference type="PhylomeDB" id="Q9JM62"/>
<dbReference type="TreeFam" id="TF314913"/>
<dbReference type="BioGRID-ORCS" id="70335">
    <property type="hits" value="3 hits in 80 CRISPR screens"/>
</dbReference>
<dbReference type="PRO" id="PR:Q9JM62"/>
<dbReference type="Proteomes" id="UP000000589">
    <property type="component" value="Chromosome 10"/>
</dbReference>
<dbReference type="RNAct" id="Q9JM62">
    <property type="molecule type" value="protein"/>
</dbReference>
<dbReference type="Bgee" id="ENSMUSG00000035504">
    <property type="expression patterns" value="Expressed in retinal neural layer and 172 other cell types or tissues"/>
</dbReference>
<dbReference type="ExpressionAtlas" id="Q9JM62">
    <property type="expression patterns" value="baseline and differential"/>
</dbReference>
<dbReference type="GO" id="GO:0045177">
    <property type="term" value="C:apical part of cell"/>
    <property type="evidence" value="ECO:0000314"/>
    <property type="project" value="MGI"/>
</dbReference>
<dbReference type="GO" id="GO:0030665">
    <property type="term" value="C:clathrin-coated vesicle membrane"/>
    <property type="evidence" value="ECO:0007669"/>
    <property type="project" value="UniProtKB-SubCell"/>
</dbReference>
<dbReference type="GO" id="GO:0005789">
    <property type="term" value="C:endoplasmic reticulum membrane"/>
    <property type="evidence" value="ECO:0000314"/>
    <property type="project" value="UniProtKB"/>
</dbReference>
<dbReference type="GO" id="GO:0001917">
    <property type="term" value="C:photoreceptor inner segment"/>
    <property type="evidence" value="ECO:0000250"/>
    <property type="project" value="UniProtKB"/>
</dbReference>
<dbReference type="GO" id="GO:0044317">
    <property type="term" value="C:rod spherule"/>
    <property type="evidence" value="ECO:0000314"/>
    <property type="project" value="UniProtKB"/>
</dbReference>
<dbReference type="GO" id="GO:0050908">
    <property type="term" value="P:detection of light stimulus involved in visual perception"/>
    <property type="evidence" value="ECO:0000250"/>
    <property type="project" value="UniProtKB"/>
</dbReference>
<dbReference type="GO" id="GO:0032386">
    <property type="term" value="P:regulation of intracellular transport"/>
    <property type="evidence" value="ECO:0000314"/>
    <property type="project" value="UniProtKB"/>
</dbReference>
<dbReference type="InterPro" id="IPR004345">
    <property type="entry name" value="TB2_DP1_HVA22"/>
</dbReference>
<dbReference type="PANTHER" id="PTHR12300">
    <property type="entry name" value="HVA22-LIKE PROTEINS"/>
    <property type="match status" value="1"/>
</dbReference>
<dbReference type="PANTHER" id="PTHR12300:SF133">
    <property type="entry name" value="RECEPTOR EXPRESSION-ENHANCING PROTEIN 6"/>
    <property type="match status" value="1"/>
</dbReference>
<dbReference type="Pfam" id="PF03134">
    <property type="entry name" value="TB2_DP1_HVA22"/>
    <property type="match status" value="1"/>
</dbReference>
<name>REEP6_MOUSE</name>
<reference key="1">
    <citation type="journal article" date="2004" name="Cell">
        <title>RTP family members induce functional expression of mammalian odorant receptors.</title>
        <authorList>
            <person name="Saito H."/>
            <person name="Kubota M."/>
            <person name="Roberts R.W."/>
            <person name="Chi Q."/>
            <person name="Matsunami H."/>
        </authorList>
    </citation>
    <scope>NUCLEOTIDE SEQUENCE [MRNA] (ISOFORM 1)</scope>
</reference>
<reference key="2">
    <citation type="journal article" date="2005" name="Invest. Ophthalmol. Vis. Sci.">
        <title>Deleted in polyposis 1-like 1 gene (Dp1l1): a novel gene richly expressed in retinal ganglion cells.</title>
        <authorList>
            <person name="Sato H."/>
            <person name="Tomita H."/>
            <person name="Nakazawa T."/>
            <person name="Wakana S."/>
            <person name="Tamai M."/>
        </authorList>
    </citation>
    <scope>NUCLEOTIDE SEQUENCE [MRNA] (ISOFORM 1)</scope>
    <scope>TISSUE SPECIFICITY</scope>
    <source>
        <strain>C57BL/6J</strain>
        <tissue>Retina</tissue>
    </source>
</reference>
<reference key="3">
    <citation type="journal article" date="2004" name="Genome Res.">
        <title>The status, quality, and expansion of the NIH full-length cDNA project: the Mammalian Gene Collection (MGC).</title>
        <authorList>
            <consortium name="The MGC Project Team"/>
        </authorList>
    </citation>
    <scope>NUCLEOTIDE SEQUENCE [LARGE SCALE MRNA] (ISOFORM 2)</scope>
    <source>
        <strain>FVB/N</strain>
        <tissue>Liver</tissue>
    </source>
</reference>
<reference key="4">
    <citation type="journal article" date="2010" name="Cell">
        <title>A tissue-specific atlas of mouse protein phosphorylation and expression.</title>
        <authorList>
            <person name="Huttlin E.L."/>
            <person name="Jedrychowski M.P."/>
            <person name="Elias J.E."/>
            <person name="Goswami T."/>
            <person name="Rad R."/>
            <person name="Beausoleil S.A."/>
            <person name="Villen J."/>
            <person name="Haas W."/>
            <person name="Sowa M.E."/>
            <person name="Gygi S.P."/>
        </authorList>
    </citation>
    <scope>IDENTIFICATION BY MASS SPECTROMETRY [LARGE SCALE ANALYSIS]</scope>
    <source>
        <tissue>Kidney</tissue>
        <tissue>Liver</tissue>
        <tissue>Lung</tissue>
        <tissue>Pancreas</tissue>
        <tissue>Testis</tissue>
    </source>
</reference>
<reference key="5">
    <citation type="journal article" date="2013" name="PLoS ONE">
        <title>REEPs are membrane shaping adapter proteins that modulate specific G protein-coupled receptor trafficking by affecting ER cargo capacity.</title>
        <authorList>
            <person name="Bjork S."/>
            <person name="Hurt C.M."/>
            <person name="Ho V.K."/>
            <person name="Angelotti T."/>
        </authorList>
    </citation>
    <scope>FUNCTION</scope>
    <scope>SUBCELLULAR LOCATION</scope>
</reference>
<reference key="6">
    <citation type="journal article" date="2014" name="Hum. Mol. Genet.">
        <title>Regulation of a novel isoform of receptor expression enhancing protein REEP6 in rod photoreceptors by bZIP transcription factor NRL.</title>
        <authorList>
            <person name="Hao H."/>
            <person name="Veleri S."/>
            <person name="Sun B."/>
            <person name="Kim D.S."/>
            <person name="Keeley P.W."/>
            <person name="Kim J.W."/>
            <person name="Yang H.J."/>
            <person name="Yadav S.P."/>
            <person name="Manjunath S.H."/>
            <person name="Sood R."/>
            <person name="Liu P."/>
            <person name="Reese B.E."/>
            <person name="Swaroop A."/>
        </authorList>
    </citation>
    <scope>FUNCTION</scope>
    <scope>ALTERNATIVE SPLICING (ISOFORMS 1 AND 2)</scope>
    <scope>TISSUE SPECIFICITY</scope>
    <scope>DEVELOPMENTAL STAGE</scope>
</reference>
<reference key="7">
    <citation type="journal article" date="2017" name="Hum. Mol. Genet.">
        <title>REEP6 mediates trafficking of a subset of Clathrin-coated vesicles and is critical for rod photoreceptor function and survival.</title>
        <authorList>
            <person name="Veleri S."/>
            <person name="Nellissery J."/>
            <person name="Mishra B."/>
            <person name="Manjunath S.H."/>
            <person name="Brooks M.J."/>
            <person name="Dong L."/>
            <person name="Nagashima K."/>
            <person name="Qian H."/>
            <person name="Gao C."/>
            <person name="Sergeev Y.V."/>
            <person name="Huang X.F."/>
            <person name="Qu J."/>
            <person name="Lu F."/>
            <person name="Cideciyan A.V."/>
            <person name="Li T."/>
            <person name="Jin Z.B."/>
            <person name="Fariss R.N."/>
            <person name="Ratnapriya R."/>
            <person name="Jacobson S.G."/>
            <person name="Swaroop A."/>
        </authorList>
    </citation>
    <scope>FUNCTION</scope>
    <scope>INTERACTION WITH CLATHRIN AND STX3</scope>
    <scope>SUBCELLULAR LOCATION</scope>
    <scope>TISSUE SPECIFICITY</scope>
    <scope>DISRUPTION PHENOTYPE</scope>
</reference>
<reference key="8">
    <citation type="journal article" date="2017" name="Hum. Mol. Genet.">
        <title>REEP6 deficiency leads to retinal degeneration through disruption of ER homeostasis and protein trafficking.</title>
        <authorList>
            <person name="Agrawal S.A."/>
            <person name="Burgoyne T."/>
            <person name="Eblimit A."/>
            <person name="Bellingham J."/>
            <person name="Parfitt D.A."/>
            <person name="Lane A."/>
            <person name="Nichols R."/>
            <person name="Asomugha C."/>
            <person name="Hayes M.J."/>
            <person name="Munro P.M."/>
            <person name="Xu M."/>
            <person name="Wang K."/>
            <person name="Futter C.E."/>
            <person name="Li Y."/>
            <person name="Chen R."/>
            <person name="Cheetham M.E."/>
        </authorList>
    </citation>
    <scope>FUNCTION</scope>
    <scope>SUBCELLULAR LOCATION</scope>
    <scope>TISSUE SPECIFICITY</scope>
    <scope>DISRUPTION PHENOTYPE</scope>
</reference>
<organism>
    <name type="scientific">Mus musculus</name>
    <name type="common">Mouse</name>
    <dbReference type="NCBI Taxonomy" id="10090"/>
    <lineage>
        <taxon>Eukaryota</taxon>
        <taxon>Metazoa</taxon>
        <taxon>Chordata</taxon>
        <taxon>Craniata</taxon>
        <taxon>Vertebrata</taxon>
        <taxon>Euteleostomi</taxon>
        <taxon>Mammalia</taxon>
        <taxon>Eutheria</taxon>
        <taxon>Euarchontoglires</taxon>
        <taxon>Glires</taxon>
        <taxon>Rodentia</taxon>
        <taxon>Myomorpha</taxon>
        <taxon>Muroidea</taxon>
        <taxon>Muridae</taxon>
        <taxon>Murinae</taxon>
        <taxon>Mus</taxon>
        <taxon>Mus</taxon>
    </lineage>
</organism>
<protein>
    <recommendedName>
        <fullName>Receptor expression-enhancing protein 6</fullName>
    </recommendedName>
    <alternativeName>
        <fullName>Polyposis locus protein 1-like 1</fullName>
    </alternativeName>
    <alternativeName>
        <fullName>TB2 protein-like 1</fullName>
    </alternativeName>
</protein>
<feature type="chain" id="PRO_0000101819" description="Receptor expression-enhancing protein 6">
    <location>
        <begin position="1"/>
        <end position="201"/>
    </location>
</feature>
<feature type="transmembrane region" description="Helical" evidence="1">
    <location>
        <begin position="36"/>
        <end position="56"/>
    </location>
</feature>
<feature type="transmembrane region" description="Helical" evidence="1">
    <location>
        <begin position="89"/>
        <end position="109"/>
    </location>
</feature>
<feature type="transmembrane region" description="Helical" evidence="1">
    <location>
        <begin position="117"/>
        <end position="137"/>
    </location>
</feature>
<feature type="splice variant" id="VSP_016631" description="In isoform 2." evidence="7">
    <original>VL</original>
    <variation>AK</variation>
    <location>
        <begin position="173"/>
        <end position="174"/>
    </location>
</feature>
<feature type="splice variant" id="VSP_016632" description="In isoform 2." evidence="7">
    <location>
        <begin position="175"/>
        <end position="201"/>
    </location>
</feature>
<sequence length="201" mass="22204">MDGLRQRFERFLEQKNVATEALGALEARTGVEKRYLAAGALALLGLYLLFGYGASLLCNVIGFVYPAYASVKAIESPSKEDDTVWLTYWVVYALFGLVEFFSDLLLFWFPFYYAGKCAFLLFCMTPGPWNGALLLYHRVIRPLFLKHHMALDSAASQLSGRALDLAAGITRDVLQALARGRALVTPASTSEPPAALELDPK</sequence>
<evidence type="ECO:0000255" key="1"/>
<evidence type="ECO:0000269" key="2">
    <source>
    </source>
</evidence>
<evidence type="ECO:0000269" key="3">
    <source>
    </source>
</evidence>
<evidence type="ECO:0000269" key="4">
    <source>
    </source>
</evidence>
<evidence type="ECO:0000269" key="5">
    <source>
    </source>
</evidence>
<evidence type="ECO:0000269" key="6">
    <source>
    </source>
</evidence>
<evidence type="ECO:0000303" key="7">
    <source>
    </source>
</evidence>
<evidence type="ECO:0000305" key="8"/>
<comment type="function">
    <text evidence="3 4 5 6">Required for correct function and survival of retinal photoreceptors (PubMed:24098485, PubMed:24691551, PubMed:28475715). Required for retinal development (PubMed:28369466). In rod photoreceptors, facilitates stability and/or trafficking of guanylate cyclases and is required to maintain endoplasmic reticulum and mitochondrial homeostasis (PubMed:28475715). May play a role in clathrin-coated intracellular vesicle trafficking of proteins from the endoplasmic reticulum to the retinal rod plasma membrane (PubMed:24098485, PubMed:28369466).</text>
</comment>
<comment type="subunit">
    <text evidence="5">Interacts with STX3 (PubMed:28369466). Interacts with clathrin (PubMed:28369466).</text>
</comment>
<comment type="subcellular location">
    <subcellularLocation>
        <location evidence="3 6">Endoplasmic reticulum membrane</location>
        <topology evidence="1">Multi-pass membrane protein</topology>
    </subcellularLocation>
    <subcellularLocation>
        <location evidence="5">Cytoplasmic vesicle</location>
        <location evidence="5">Clathrin-coated vesicle membrane</location>
        <topology evidence="1">Multi-pass membrane protein</topology>
    </subcellularLocation>
</comment>
<comment type="alternative products">
    <event type="alternative splicing"/>
    <isoform>
        <id>Q9JM62-1</id>
        <name>1</name>
        <sequence type="displayed"/>
    </isoform>
    <isoform>
        <id>Q9JM62-2</id>
        <name>2</name>
        <sequence type="described" ref="VSP_016631 VSP_016632"/>
    </isoform>
</comment>
<comment type="tissue specificity">
    <text evidence="2 4 5 6">Expressed in the inner segment of rod photoreceptors and outer plexiform layer of the retina (at protein level) (PubMed:24691551, PubMed:28369466, PubMed:28475715). Expressed in liver, but not detected in brain, muscle, kidney, retinal cone photoreceptors or retinal ganglion cells (at protein level) (PubMed:24691551). Highly expressed in the ganglion cell layer of the retina and in liver, and also detected at low levels in kidney and testis (PubMed:15728532). Isoform 1: Expressed in the retina (PubMed:15728532, PubMed:24691551). Isoform 2: Expressed in liver (PubMed:24691551).</text>
</comment>
<comment type="developmental stage">
    <text evidence="4">Isoform 1 shows increasing levels of expression in the retina from birth, reaching maximal levels by 12 days of age.</text>
</comment>
<comment type="disruption phenotype">
    <text evidence="5 6">Viable, however mice develop progressive deterioration in retinal response, and male mice are sterile (PubMed:28369466, PubMed:28475715). Progressive retinal rod dysfunction first evident from one month of age progressing to almost undetectable scotopic response at one year of age (PubMed:28369466). Progressive degeneration of photopic response by retinal cone receptors first evident at one year of age (PubMed:28369466). Defective retinal morphology with significant thinning of the outer nuclear layer and reduced rows of nuclei (PubMed:28369466, PubMed:28475715). Accumulation of vacuole-like structures at the apical inner segment of the retina (PubMed:28369466). Reduced and disorganised photoreceptors with shortened fragmented outer segment (PubMed:28475715). Altered endoplasmic reticulum (ER) organization with increased ER area near the base of the outer segment, increased number of mitochondria in the rod ellipsoid region and induction of ER stress (PubMed:28475715). Reduced retinal expression of phototransduction proteins Cngb1 and Gnat1 and of Aipl1 (PubMed:28369466). Reduced expression of guanylate cyclases Gucy2e/GC1 and Gucy2f/GC2 in the rod outer segment and mislocalization of Pde6a from the outer segment to the inner segment and outer nuclear layer (PubMed:28475715).</text>
</comment>
<comment type="similarity">
    <text evidence="8">Belongs to the DP1 family.</text>
</comment>
<gene>
    <name type="primary">Reep6</name>
    <name type="synonym">Dp1l1</name>
    <name type="synonym">Tb2l1</name>
</gene>
<proteinExistence type="evidence at protein level"/>
<keyword id="KW-0025">Alternative splicing</keyword>
<keyword id="KW-0968">Cytoplasmic vesicle</keyword>
<keyword id="KW-0256">Endoplasmic reticulum</keyword>
<keyword id="KW-0472">Membrane</keyword>
<keyword id="KW-1185">Reference proteome</keyword>
<keyword id="KW-0812">Transmembrane</keyword>
<keyword id="KW-1133">Transmembrane helix</keyword>